<comment type="function">
    <text evidence="1">Component of the spliceosomal U1 snRNP, which is essential for recognition of the pre-mRNA 5' splice-site and the subsequent assembly of the spliceosome. U1-C is directly involved in initial 5' splice-site recognition for both constitutive and regulated alternative splicing. The interaction with the 5' splice-site seems to precede base-pairing between the pre-mRNA and the U1 snRNA. Stimulates commitment or early (E) complex formation by stabilizing the base pairing of the 5' end of the U1 snRNA and the 5' splice-site region.</text>
</comment>
<comment type="subunit">
    <text evidence="1">U1 snRNP is composed of the 7 core Sm proteins B/B', D1, D2, D3, E, F and G that assemble in a heptameric protein ring on the Sm site of the small nuclear RNA to form the core snRNP, and at least 3 U1 snRNP-specific proteins U1-70K, U1-A and U1-C. U1-C interacts with U1 snRNA and the 5' splice-site region of the pre-mRNA.</text>
</comment>
<comment type="subcellular location">
    <subcellularLocation>
        <location evidence="1">Nucleus</location>
    </subcellularLocation>
</comment>
<comment type="similarity">
    <text evidence="1">Belongs to the U1 small nuclear ribonucleoprotein C family.</text>
</comment>
<accession>Q298E0</accession>
<feature type="chain" id="PRO_0000414262" description="U1 small nuclear ribonucleoprotein C">
    <location>
        <begin position="1"/>
        <end position="146"/>
    </location>
</feature>
<feature type="zinc finger region" description="Matrin-type" evidence="1">
    <location>
        <begin position="4"/>
        <end position="36"/>
    </location>
</feature>
<feature type="region of interest" description="Disordered" evidence="2">
    <location>
        <begin position="64"/>
        <end position="96"/>
    </location>
</feature>
<feature type="compositionally biased region" description="Pro residues" evidence="2">
    <location>
        <begin position="73"/>
        <end position="96"/>
    </location>
</feature>
<proteinExistence type="inferred from homology"/>
<protein>
    <recommendedName>
        <fullName evidence="1">U1 small nuclear ribonucleoprotein C</fullName>
        <shortName evidence="1">U1 snRNP C</shortName>
        <shortName evidence="1">U1-C</shortName>
        <shortName evidence="1">U1C</shortName>
    </recommendedName>
</protein>
<gene>
    <name evidence="1" type="primary">snRNP-U1-C</name>
    <name type="ORF">GA18892</name>
</gene>
<organism>
    <name type="scientific">Drosophila pseudoobscura pseudoobscura</name>
    <name type="common">Fruit fly</name>
    <dbReference type="NCBI Taxonomy" id="46245"/>
    <lineage>
        <taxon>Eukaryota</taxon>
        <taxon>Metazoa</taxon>
        <taxon>Ecdysozoa</taxon>
        <taxon>Arthropoda</taxon>
        <taxon>Hexapoda</taxon>
        <taxon>Insecta</taxon>
        <taxon>Pterygota</taxon>
        <taxon>Neoptera</taxon>
        <taxon>Endopterygota</taxon>
        <taxon>Diptera</taxon>
        <taxon>Brachycera</taxon>
        <taxon>Muscomorpha</taxon>
        <taxon>Ephydroidea</taxon>
        <taxon>Drosophilidae</taxon>
        <taxon>Drosophila</taxon>
        <taxon>Sophophora</taxon>
    </lineage>
</organism>
<keyword id="KW-0479">Metal-binding</keyword>
<keyword id="KW-0539">Nucleus</keyword>
<keyword id="KW-1185">Reference proteome</keyword>
<keyword id="KW-0687">Ribonucleoprotein</keyword>
<keyword id="KW-0694">RNA-binding</keyword>
<keyword id="KW-0862">Zinc</keyword>
<keyword id="KW-0863">Zinc-finger</keyword>
<evidence type="ECO:0000255" key="1">
    <source>
        <dbReference type="HAMAP-Rule" id="MF_03153"/>
    </source>
</evidence>
<evidence type="ECO:0000256" key="2">
    <source>
        <dbReference type="SAM" id="MobiDB-lite"/>
    </source>
</evidence>
<dbReference type="EMBL" id="CM000070">
    <property type="protein sequence ID" value="EAL28015.1"/>
    <property type="molecule type" value="Genomic_DNA"/>
</dbReference>
<dbReference type="RefSeq" id="XP_001358872.1">
    <property type="nucleotide sequence ID" value="XM_001358835.4"/>
</dbReference>
<dbReference type="SMR" id="Q298E0"/>
<dbReference type="FunCoup" id="Q298E0">
    <property type="interactions" value="870"/>
</dbReference>
<dbReference type="STRING" id="46245.Q298E0"/>
<dbReference type="EnsemblMetazoa" id="FBtr0283519">
    <property type="protein sequence ID" value="FBpp0281957"/>
    <property type="gene ID" value="FBgn0078892"/>
</dbReference>
<dbReference type="GeneID" id="4801839"/>
<dbReference type="KEGG" id="dpo:4801839"/>
<dbReference type="CTD" id="42274"/>
<dbReference type="eggNOG" id="KOG3454">
    <property type="taxonomic scope" value="Eukaryota"/>
</dbReference>
<dbReference type="HOGENOM" id="CLU_079697_3_1_1"/>
<dbReference type="InParanoid" id="Q298E0"/>
<dbReference type="OMA" id="QMRPPLM"/>
<dbReference type="PhylomeDB" id="Q298E0"/>
<dbReference type="Proteomes" id="UP000001819">
    <property type="component" value="Chromosome 2"/>
</dbReference>
<dbReference type="Bgee" id="FBgn0078892">
    <property type="expression patterns" value="Expressed in female reproductive system and 3 other cell types or tissues"/>
</dbReference>
<dbReference type="GO" id="GO:0000243">
    <property type="term" value="C:commitment complex"/>
    <property type="evidence" value="ECO:0007669"/>
    <property type="project" value="UniProtKB-UniRule"/>
</dbReference>
<dbReference type="GO" id="GO:0005685">
    <property type="term" value="C:U1 snRNP"/>
    <property type="evidence" value="ECO:0007669"/>
    <property type="project" value="UniProtKB-UniRule"/>
</dbReference>
<dbReference type="GO" id="GO:0071004">
    <property type="term" value="C:U2-type prespliceosome"/>
    <property type="evidence" value="ECO:0007669"/>
    <property type="project" value="UniProtKB-UniRule"/>
</dbReference>
<dbReference type="GO" id="GO:0003729">
    <property type="term" value="F:mRNA binding"/>
    <property type="evidence" value="ECO:0007669"/>
    <property type="project" value="UniProtKB-UniRule"/>
</dbReference>
<dbReference type="GO" id="GO:0030627">
    <property type="term" value="F:pre-mRNA 5'-splice site binding"/>
    <property type="evidence" value="ECO:0007669"/>
    <property type="project" value="InterPro"/>
</dbReference>
<dbReference type="GO" id="GO:0030619">
    <property type="term" value="F:U1 snRNA binding"/>
    <property type="evidence" value="ECO:0007669"/>
    <property type="project" value="UniProtKB-UniRule"/>
</dbReference>
<dbReference type="GO" id="GO:0008270">
    <property type="term" value="F:zinc ion binding"/>
    <property type="evidence" value="ECO:0007669"/>
    <property type="project" value="UniProtKB-UniRule"/>
</dbReference>
<dbReference type="GO" id="GO:0000395">
    <property type="term" value="P:mRNA 5'-splice site recognition"/>
    <property type="evidence" value="ECO:0007669"/>
    <property type="project" value="UniProtKB-UniRule"/>
</dbReference>
<dbReference type="GO" id="GO:0000387">
    <property type="term" value="P:spliceosomal snRNP assembly"/>
    <property type="evidence" value="ECO:0007669"/>
    <property type="project" value="UniProtKB-UniRule"/>
</dbReference>
<dbReference type="FunFam" id="3.30.160.60:FF:000059">
    <property type="entry name" value="U1 small nuclear ribonucleoprotein C"/>
    <property type="match status" value="1"/>
</dbReference>
<dbReference type="Gene3D" id="3.30.160.60">
    <property type="entry name" value="Classic Zinc Finger"/>
    <property type="match status" value="1"/>
</dbReference>
<dbReference type="HAMAP" id="MF_03153">
    <property type="entry name" value="U1_C"/>
    <property type="match status" value="1"/>
</dbReference>
<dbReference type="InterPro" id="IPR000690">
    <property type="entry name" value="Matrin/U1-C_Znf_C2H2"/>
</dbReference>
<dbReference type="InterPro" id="IPR003604">
    <property type="entry name" value="Matrin/U1-like-C_Znf_C2H2"/>
</dbReference>
<dbReference type="InterPro" id="IPR013085">
    <property type="entry name" value="U1-CZ_Znf_C2H2"/>
</dbReference>
<dbReference type="InterPro" id="IPR017340">
    <property type="entry name" value="U1_snRNP-C"/>
</dbReference>
<dbReference type="InterPro" id="IPR036236">
    <property type="entry name" value="Znf_C2H2_sf"/>
</dbReference>
<dbReference type="PANTHER" id="PTHR31148">
    <property type="entry name" value="U1 SMALL NUCLEAR RIBONUCLEOPROTEIN C"/>
    <property type="match status" value="1"/>
</dbReference>
<dbReference type="PANTHER" id="PTHR31148:SF1">
    <property type="entry name" value="U1 SMALL NUCLEAR RIBONUCLEOPROTEIN C"/>
    <property type="match status" value="1"/>
</dbReference>
<dbReference type="Pfam" id="PF06220">
    <property type="entry name" value="zf-U1"/>
    <property type="match status" value="1"/>
</dbReference>
<dbReference type="PIRSF" id="PIRSF037969">
    <property type="entry name" value="U1_snRNP-C"/>
    <property type="match status" value="1"/>
</dbReference>
<dbReference type="SMART" id="SM00451">
    <property type="entry name" value="ZnF_U1"/>
    <property type="match status" value="1"/>
</dbReference>
<dbReference type="SUPFAM" id="SSF57667">
    <property type="entry name" value="beta-beta-alpha zinc fingers"/>
    <property type="match status" value="1"/>
</dbReference>
<dbReference type="PROSITE" id="PS50171">
    <property type="entry name" value="ZF_MATRIN"/>
    <property type="match status" value="1"/>
</dbReference>
<name>RU1C_DROPS</name>
<reference key="1">
    <citation type="journal article" date="2005" name="Genome Res.">
        <title>Comparative genome sequencing of Drosophila pseudoobscura: chromosomal, gene, and cis-element evolution.</title>
        <authorList>
            <person name="Richards S."/>
            <person name="Liu Y."/>
            <person name="Bettencourt B.R."/>
            <person name="Hradecky P."/>
            <person name="Letovsky S."/>
            <person name="Nielsen R."/>
            <person name="Thornton K."/>
            <person name="Hubisz M.J."/>
            <person name="Chen R."/>
            <person name="Meisel R.P."/>
            <person name="Couronne O."/>
            <person name="Hua S."/>
            <person name="Smith M.A."/>
            <person name="Zhang P."/>
            <person name="Liu J."/>
            <person name="Bussemaker H.J."/>
            <person name="van Batenburg M.F."/>
            <person name="Howells S.L."/>
            <person name="Scherer S.E."/>
            <person name="Sodergren E."/>
            <person name="Matthews B.B."/>
            <person name="Crosby M.A."/>
            <person name="Schroeder A.J."/>
            <person name="Ortiz-Barrientos D."/>
            <person name="Rives C.M."/>
            <person name="Metzker M.L."/>
            <person name="Muzny D.M."/>
            <person name="Scott G."/>
            <person name="Steffen D."/>
            <person name="Wheeler D.A."/>
            <person name="Worley K.C."/>
            <person name="Havlak P."/>
            <person name="Durbin K.J."/>
            <person name="Egan A."/>
            <person name="Gill R."/>
            <person name="Hume J."/>
            <person name="Morgan M.B."/>
            <person name="Miner G."/>
            <person name="Hamilton C."/>
            <person name="Huang Y."/>
            <person name="Waldron L."/>
            <person name="Verduzco D."/>
            <person name="Clerc-Blankenburg K.P."/>
            <person name="Dubchak I."/>
            <person name="Noor M.A.F."/>
            <person name="Anderson W."/>
            <person name="White K.P."/>
            <person name="Clark A.G."/>
            <person name="Schaeffer S.W."/>
            <person name="Gelbart W.M."/>
            <person name="Weinstock G.M."/>
            <person name="Gibbs R.A."/>
        </authorList>
    </citation>
    <scope>NUCLEOTIDE SEQUENCE [LARGE SCALE GENOMIC DNA]</scope>
    <source>
        <strain>MV2-25 / Tucson 14011-0121.94</strain>
    </source>
</reference>
<sequence length="146" mass="15979">MPKYYCDYCDTYLTHDSPSVRKTHCTGRKHRDNVKFYYQKWMEEQAQHLIDATTAAFKAGKITNNPFAGGPSSAPPKPSGVSIPPPNMGAPPRPGMPGMPFMPPMMNPMMTGMRPPPIMNPMAMMGPPPPLGTIPGVRPPIMNGPK</sequence>